<organism>
    <name type="scientific">Xenopus laevis</name>
    <name type="common">African clawed frog</name>
    <dbReference type="NCBI Taxonomy" id="8355"/>
    <lineage>
        <taxon>Eukaryota</taxon>
        <taxon>Metazoa</taxon>
        <taxon>Chordata</taxon>
        <taxon>Craniata</taxon>
        <taxon>Vertebrata</taxon>
        <taxon>Euteleostomi</taxon>
        <taxon>Amphibia</taxon>
        <taxon>Batrachia</taxon>
        <taxon>Anura</taxon>
        <taxon>Pipoidea</taxon>
        <taxon>Pipidae</taxon>
        <taxon>Xenopodinae</taxon>
        <taxon>Xenopus</taxon>
        <taxon>Xenopus</taxon>
    </lineage>
</organism>
<evidence type="ECO:0000256" key="1">
    <source>
        <dbReference type="SAM" id="MobiDB-lite"/>
    </source>
</evidence>
<evidence type="ECO:0000305" key="2"/>
<sequence length="295" mass="33366">MEKLQFQGGDRAVDEYAEYRRIVGDDDGGKLFTPEEYEQYKKTVLPMRLQNRLYVSWRSPCGMDCKLVGPETACFCTHRYKQHKTDFKELPKERPVLLPCKVSKCPCKSFHYIPLNGSRPIRCRCKHFADEHSLAGTYHCTKCTKCSGFHSSFTCGCGQPAYAHDTIVETKEERLAQGKPVGHDVPYASMGGLTGFSSLAEGYMRLDASGTGAPGASFLESSQSGASHPFLKMYDMPCTVQGVSEPPGIDKQVSSMRLSEEDDMAYFERRYQERLRKEKEHKRQKNSKPPTTQRP</sequence>
<feature type="chain" id="PRO_0000295142" description="Protein FAM221A">
    <location>
        <begin position="1"/>
        <end position="295"/>
    </location>
</feature>
<feature type="region of interest" description="Disordered" evidence="1">
    <location>
        <begin position="244"/>
        <end position="295"/>
    </location>
</feature>
<feature type="compositionally biased region" description="Basic and acidic residues" evidence="1">
    <location>
        <begin position="266"/>
        <end position="278"/>
    </location>
</feature>
<accession>Q2VPL9</accession>
<name>F221A_XENLA</name>
<dbReference type="EMBL" id="BC108613">
    <property type="protein sequence ID" value="AAI08614.1"/>
    <property type="molecule type" value="mRNA"/>
</dbReference>
<dbReference type="RefSeq" id="NP_001089888.1">
    <property type="nucleotide sequence ID" value="NM_001096419.1"/>
</dbReference>
<dbReference type="DNASU" id="734955"/>
<dbReference type="GeneID" id="734955"/>
<dbReference type="KEGG" id="xla:734955"/>
<dbReference type="AGR" id="Xenbase:XB-GENE-6078539"/>
<dbReference type="CTD" id="734955"/>
<dbReference type="Xenbase" id="XB-GENE-6078539">
    <property type="gene designation" value="fam221a.L"/>
</dbReference>
<dbReference type="OrthoDB" id="310364at2759"/>
<dbReference type="Proteomes" id="UP000186698">
    <property type="component" value="Chromosome 6L"/>
</dbReference>
<dbReference type="Bgee" id="734955">
    <property type="expression patterns" value="Expressed in testis and 16 other cell types or tissues"/>
</dbReference>
<dbReference type="InterPro" id="IPR026755">
    <property type="entry name" value="Fam221a/b"/>
</dbReference>
<dbReference type="PANTHER" id="PTHR31214:SF2">
    <property type="entry name" value="PROTEIN FAM221A"/>
    <property type="match status" value="1"/>
</dbReference>
<dbReference type="PANTHER" id="PTHR31214">
    <property type="entry name" value="PROTEIN FAM221A-RELATED"/>
    <property type="match status" value="1"/>
</dbReference>
<dbReference type="Pfam" id="PF14753">
    <property type="entry name" value="FAM221"/>
    <property type="match status" value="1"/>
</dbReference>
<keyword id="KW-1185">Reference proteome</keyword>
<comment type="similarity">
    <text evidence="2">Belongs to the FAM221 family.</text>
</comment>
<gene>
    <name type="primary">fam221a</name>
</gene>
<protein>
    <recommendedName>
        <fullName>Protein FAM221A</fullName>
    </recommendedName>
</protein>
<proteinExistence type="evidence at transcript level"/>
<reference key="1">
    <citation type="submission" date="2005-11" db="EMBL/GenBank/DDBJ databases">
        <authorList>
            <consortium name="NIH - Xenopus Gene Collection (XGC) project"/>
        </authorList>
    </citation>
    <scope>NUCLEOTIDE SEQUENCE [LARGE SCALE MRNA]</scope>
    <source>
        <tissue>Testis</tissue>
    </source>
</reference>